<feature type="chain" id="PRO_0000289391" description="Lipoprotein signal peptidase">
    <location>
        <begin position="1"/>
        <end position="157"/>
    </location>
</feature>
<feature type="transmembrane region" description="Helical" evidence="1">
    <location>
        <begin position="10"/>
        <end position="30"/>
    </location>
</feature>
<feature type="transmembrane region" description="Helical" evidence="1">
    <location>
        <begin position="38"/>
        <end position="58"/>
    </location>
</feature>
<feature type="transmembrane region" description="Helical" evidence="1">
    <location>
        <begin position="59"/>
        <end position="79"/>
    </location>
</feature>
<feature type="transmembrane region" description="Helical" evidence="1">
    <location>
        <begin position="84"/>
        <end position="104"/>
    </location>
</feature>
<feature type="transmembrane region" description="Helical" evidence="1">
    <location>
        <begin position="122"/>
        <end position="142"/>
    </location>
</feature>
<feature type="active site" evidence="1">
    <location>
        <position position="114"/>
    </location>
</feature>
<feature type="active site" evidence="1">
    <location>
        <position position="131"/>
    </location>
</feature>
<accession>Q1CV80</accession>
<evidence type="ECO:0000255" key="1">
    <source>
        <dbReference type="HAMAP-Rule" id="MF_00161"/>
    </source>
</evidence>
<dbReference type="EC" id="3.4.23.36" evidence="1"/>
<dbReference type="EMBL" id="CP000241">
    <property type="protein sequence ID" value="ABF84142.1"/>
    <property type="molecule type" value="Genomic_DNA"/>
</dbReference>
<dbReference type="RefSeq" id="WP_000921377.1">
    <property type="nucleotide sequence ID" value="NC_008086.1"/>
</dbReference>
<dbReference type="SMR" id="Q1CV80"/>
<dbReference type="KEGG" id="hpa:HPAG1_0075"/>
<dbReference type="HOGENOM" id="CLU_083252_4_3_7"/>
<dbReference type="UniPathway" id="UPA00665"/>
<dbReference type="GO" id="GO:0005886">
    <property type="term" value="C:plasma membrane"/>
    <property type="evidence" value="ECO:0007669"/>
    <property type="project" value="UniProtKB-SubCell"/>
</dbReference>
<dbReference type="GO" id="GO:0004190">
    <property type="term" value="F:aspartic-type endopeptidase activity"/>
    <property type="evidence" value="ECO:0007669"/>
    <property type="project" value="UniProtKB-UniRule"/>
</dbReference>
<dbReference type="GO" id="GO:0006508">
    <property type="term" value="P:proteolysis"/>
    <property type="evidence" value="ECO:0007669"/>
    <property type="project" value="UniProtKB-KW"/>
</dbReference>
<dbReference type="HAMAP" id="MF_00161">
    <property type="entry name" value="LspA"/>
    <property type="match status" value="1"/>
</dbReference>
<dbReference type="InterPro" id="IPR001872">
    <property type="entry name" value="Peptidase_A8"/>
</dbReference>
<dbReference type="NCBIfam" id="TIGR00077">
    <property type="entry name" value="lspA"/>
    <property type="match status" value="1"/>
</dbReference>
<dbReference type="PANTHER" id="PTHR33695">
    <property type="entry name" value="LIPOPROTEIN SIGNAL PEPTIDASE"/>
    <property type="match status" value="1"/>
</dbReference>
<dbReference type="PANTHER" id="PTHR33695:SF1">
    <property type="entry name" value="LIPOPROTEIN SIGNAL PEPTIDASE"/>
    <property type="match status" value="1"/>
</dbReference>
<dbReference type="Pfam" id="PF01252">
    <property type="entry name" value="Peptidase_A8"/>
    <property type="match status" value="1"/>
</dbReference>
<dbReference type="PRINTS" id="PR00781">
    <property type="entry name" value="LIPOSIGPTASE"/>
</dbReference>
<dbReference type="PROSITE" id="PS00855">
    <property type="entry name" value="SPASE_II"/>
    <property type="match status" value="1"/>
</dbReference>
<name>LSPA_HELPH</name>
<keyword id="KW-0064">Aspartyl protease</keyword>
<keyword id="KW-0997">Cell inner membrane</keyword>
<keyword id="KW-1003">Cell membrane</keyword>
<keyword id="KW-0378">Hydrolase</keyword>
<keyword id="KW-0472">Membrane</keyword>
<keyword id="KW-0645">Protease</keyword>
<keyword id="KW-0812">Transmembrane</keyword>
<keyword id="KW-1133">Transmembrane helix</keyword>
<sequence>MLKTTKKSLLVFMGGFFLIFGVDQAIKYAILEGFRYESLMVDIVLVFNKGVAFSLLSFLEGGLKYLQILLILGLFIFLIRQIELFKTHAIEFGMVFGAGVSNVLDRFVHGGVVDYVYYHYGFDFAIFNFADVMIDVGVGVLLLRQFFFKQKQNKIKA</sequence>
<comment type="function">
    <text evidence="1">This protein specifically catalyzes the removal of signal peptides from prolipoproteins.</text>
</comment>
<comment type="catalytic activity">
    <reaction evidence="1">
        <text>Release of signal peptides from bacterial membrane prolipoproteins. Hydrolyzes -Xaa-Yaa-Zaa-|-(S,diacylglyceryl)Cys-, in which Xaa is hydrophobic (preferably Leu), and Yaa (Ala or Ser) and Zaa (Gly or Ala) have small, neutral side chains.</text>
        <dbReference type="EC" id="3.4.23.36"/>
    </reaction>
</comment>
<comment type="pathway">
    <text evidence="1">Protein modification; lipoprotein biosynthesis (signal peptide cleavage).</text>
</comment>
<comment type="subcellular location">
    <subcellularLocation>
        <location evidence="1">Cell inner membrane</location>
        <topology evidence="1">Multi-pass membrane protein</topology>
    </subcellularLocation>
</comment>
<comment type="similarity">
    <text evidence="1">Belongs to the peptidase A8 family.</text>
</comment>
<organism>
    <name type="scientific">Helicobacter pylori (strain HPAG1)</name>
    <dbReference type="NCBI Taxonomy" id="357544"/>
    <lineage>
        <taxon>Bacteria</taxon>
        <taxon>Pseudomonadati</taxon>
        <taxon>Campylobacterota</taxon>
        <taxon>Epsilonproteobacteria</taxon>
        <taxon>Campylobacterales</taxon>
        <taxon>Helicobacteraceae</taxon>
        <taxon>Helicobacter</taxon>
    </lineage>
</organism>
<reference key="1">
    <citation type="journal article" date="2006" name="Proc. Natl. Acad. Sci. U.S.A.">
        <title>The complete genome sequence of a chronic atrophic gastritis Helicobacter pylori strain: evolution during disease progression.</title>
        <authorList>
            <person name="Oh J.D."/>
            <person name="Kling-Baeckhed H."/>
            <person name="Giannakis M."/>
            <person name="Xu J."/>
            <person name="Fulton R.S."/>
            <person name="Fulton L.A."/>
            <person name="Cordum H.S."/>
            <person name="Wang C."/>
            <person name="Elliott G."/>
            <person name="Edwards J."/>
            <person name="Mardis E.R."/>
            <person name="Engstrand L.G."/>
            <person name="Gordon J.I."/>
        </authorList>
    </citation>
    <scope>NUCLEOTIDE SEQUENCE [LARGE SCALE GENOMIC DNA]</scope>
    <source>
        <strain>HPAG1</strain>
    </source>
</reference>
<protein>
    <recommendedName>
        <fullName evidence="1">Lipoprotein signal peptidase</fullName>
        <ecNumber evidence="1">3.4.23.36</ecNumber>
    </recommendedName>
    <alternativeName>
        <fullName evidence="1">Prolipoprotein signal peptidase</fullName>
    </alternativeName>
    <alternativeName>
        <fullName evidence="1">Signal peptidase II</fullName>
        <shortName evidence="1">SPase II</shortName>
    </alternativeName>
</protein>
<gene>
    <name evidence="1" type="primary">lspA</name>
    <name type="ordered locus">HPAG1_0075</name>
</gene>
<proteinExistence type="inferred from homology"/>